<keyword id="KW-0488">Methylation</keyword>
<keyword id="KW-0687">Ribonucleoprotein</keyword>
<keyword id="KW-0689">Ribosomal protein</keyword>
<keyword id="KW-0694">RNA-binding</keyword>
<keyword id="KW-0699">rRNA-binding</keyword>
<protein>
    <recommendedName>
        <fullName evidence="1">Large ribosomal subunit protein uL11</fullName>
    </recommendedName>
    <alternativeName>
        <fullName evidence="2">50S ribosomal protein L11</fullName>
    </alternativeName>
</protein>
<organism>
    <name type="scientific">Mycobacterium sp. (strain KMS)</name>
    <dbReference type="NCBI Taxonomy" id="189918"/>
    <lineage>
        <taxon>Bacteria</taxon>
        <taxon>Bacillati</taxon>
        <taxon>Actinomycetota</taxon>
        <taxon>Actinomycetes</taxon>
        <taxon>Mycobacteriales</taxon>
        <taxon>Mycobacteriaceae</taxon>
        <taxon>Mycobacterium</taxon>
    </lineage>
</organism>
<name>RL11_MYCSK</name>
<proteinExistence type="inferred from homology"/>
<accession>A1UBE6</accession>
<evidence type="ECO:0000255" key="1">
    <source>
        <dbReference type="HAMAP-Rule" id="MF_00736"/>
    </source>
</evidence>
<evidence type="ECO:0000305" key="2"/>
<feature type="chain" id="PRO_1000046222" description="Large ribosomal subunit protein uL11">
    <location>
        <begin position="1"/>
        <end position="142"/>
    </location>
</feature>
<dbReference type="EMBL" id="CP000518">
    <property type="protein sequence ID" value="ABL90154.1"/>
    <property type="molecule type" value="Genomic_DNA"/>
</dbReference>
<dbReference type="SMR" id="A1UBE6"/>
<dbReference type="STRING" id="189918.Mkms_0940"/>
<dbReference type="KEGG" id="mkm:Mkms_0940"/>
<dbReference type="HOGENOM" id="CLU_074237_2_1_11"/>
<dbReference type="OrthoDB" id="9802408at2"/>
<dbReference type="GO" id="GO:0022625">
    <property type="term" value="C:cytosolic large ribosomal subunit"/>
    <property type="evidence" value="ECO:0007669"/>
    <property type="project" value="TreeGrafter"/>
</dbReference>
<dbReference type="GO" id="GO:0070180">
    <property type="term" value="F:large ribosomal subunit rRNA binding"/>
    <property type="evidence" value="ECO:0007669"/>
    <property type="project" value="UniProtKB-UniRule"/>
</dbReference>
<dbReference type="GO" id="GO:0003735">
    <property type="term" value="F:structural constituent of ribosome"/>
    <property type="evidence" value="ECO:0007669"/>
    <property type="project" value="InterPro"/>
</dbReference>
<dbReference type="GO" id="GO:0006412">
    <property type="term" value="P:translation"/>
    <property type="evidence" value="ECO:0007669"/>
    <property type="project" value="UniProtKB-UniRule"/>
</dbReference>
<dbReference type="CDD" id="cd00349">
    <property type="entry name" value="Ribosomal_L11"/>
    <property type="match status" value="1"/>
</dbReference>
<dbReference type="FunFam" id="1.10.10.250:FF:000001">
    <property type="entry name" value="50S ribosomal protein L11"/>
    <property type="match status" value="1"/>
</dbReference>
<dbReference type="FunFam" id="3.30.1550.10:FF:000001">
    <property type="entry name" value="50S ribosomal protein L11"/>
    <property type="match status" value="1"/>
</dbReference>
<dbReference type="Gene3D" id="1.10.10.250">
    <property type="entry name" value="Ribosomal protein L11, C-terminal domain"/>
    <property type="match status" value="1"/>
</dbReference>
<dbReference type="Gene3D" id="3.30.1550.10">
    <property type="entry name" value="Ribosomal protein L11/L12, N-terminal domain"/>
    <property type="match status" value="1"/>
</dbReference>
<dbReference type="HAMAP" id="MF_00736">
    <property type="entry name" value="Ribosomal_uL11"/>
    <property type="match status" value="1"/>
</dbReference>
<dbReference type="InterPro" id="IPR000911">
    <property type="entry name" value="Ribosomal_uL11"/>
</dbReference>
<dbReference type="InterPro" id="IPR006519">
    <property type="entry name" value="Ribosomal_uL11_bac-typ"/>
</dbReference>
<dbReference type="InterPro" id="IPR020783">
    <property type="entry name" value="Ribosomal_uL11_C"/>
</dbReference>
<dbReference type="InterPro" id="IPR036769">
    <property type="entry name" value="Ribosomal_uL11_C_sf"/>
</dbReference>
<dbReference type="InterPro" id="IPR020785">
    <property type="entry name" value="Ribosomal_uL11_CS"/>
</dbReference>
<dbReference type="InterPro" id="IPR020784">
    <property type="entry name" value="Ribosomal_uL11_N"/>
</dbReference>
<dbReference type="InterPro" id="IPR036796">
    <property type="entry name" value="Ribosomal_uL11_N_sf"/>
</dbReference>
<dbReference type="NCBIfam" id="TIGR01632">
    <property type="entry name" value="L11_bact"/>
    <property type="match status" value="1"/>
</dbReference>
<dbReference type="PANTHER" id="PTHR11661">
    <property type="entry name" value="60S RIBOSOMAL PROTEIN L12"/>
    <property type="match status" value="1"/>
</dbReference>
<dbReference type="PANTHER" id="PTHR11661:SF1">
    <property type="entry name" value="LARGE RIBOSOMAL SUBUNIT PROTEIN UL11M"/>
    <property type="match status" value="1"/>
</dbReference>
<dbReference type="Pfam" id="PF00298">
    <property type="entry name" value="Ribosomal_L11"/>
    <property type="match status" value="1"/>
</dbReference>
<dbReference type="Pfam" id="PF03946">
    <property type="entry name" value="Ribosomal_L11_N"/>
    <property type="match status" value="1"/>
</dbReference>
<dbReference type="SMART" id="SM00649">
    <property type="entry name" value="RL11"/>
    <property type="match status" value="1"/>
</dbReference>
<dbReference type="SUPFAM" id="SSF54747">
    <property type="entry name" value="Ribosomal L11/L12e N-terminal domain"/>
    <property type="match status" value="1"/>
</dbReference>
<dbReference type="SUPFAM" id="SSF46906">
    <property type="entry name" value="Ribosomal protein L11, C-terminal domain"/>
    <property type="match status" value="1"/>
</dbReference>
<dbReference type="PROSITE" id="PS00359">
    <property type="entry name" value="RIBOSOMAL_L11"/>
    <property type="match status" value="1"/>
</dbReference>
<sequence>MAPKKKVTGLIKLQIQAGQANPAPPVGPALGQHGVNIMEFCKAYNAATESQRGNVIPVEITVYEDRSFTFALKTPPAAKLLLKAAGVQKGSGEPHKTKVAKVTWDQVREIAETKKSDLNANDIDQAAKIIAGTARSMGITVE</sequence>
<gene>
    <name evidence="1" type="primary">rplK</name>
    <name type="ordered locus">Mkms_0940</name>
</gene>
<comment type="function">
    <text evidence="1">Forms part of the ribosomal stalk which helps the ribosome interact with GTP-bound translation factors.</text>
</comment>
<comment type="subunit">
    <text evidence="1">Part of the ribosomal stalk of the 50S ribosomal subunit. Interacts with L10 and the large rRNA to form the base of the stalk. L10 forms an elongated spine to which L12 dimers bind in a sequential fashion forming a multimeric L10(L12)X complex.</text>
</comment>
<comment type="PTM">
    <text evidence="1">One or more lysine residues are methylated.</text>
</comment>
<comment type="similarity">
    <text evidence="1">Belongs to the universal ribosomal protein uL11 family.</text>
</comment>
<reference key="1">
    <citation type="submission" date="2006-12" db="EMBL/GenBank/DDBJ databases">
        <title>Complete sequence of chromosome of Mycobacterium sp. KMS.</title>
        <authorList>
            <consortium name="US DOE Joint Genome Institute"/>
            <person name="Copeland A."/>
            <person name="Lucas S."/>
            <person name="Lapidus A."/>
            <person name="Barry K."/>
            <person name="Detter J.C."/>
            <person name="Glavina del Rio T."/>
            <person name="Hammon N."/>
            <person name="Israni S."/>
            <person name="Dalin E."/>
            <person name="Tice H."/>
            <person name="Pitluck S."/>
            <person name="Kiss H."/>
            <person name="Brettin T."/>
            <person name="Bruce D."/>
            <person name="Han C."/>
            <person name="Tapia R."/>
            <person name="Gilna P."/>
            <person name="Schmutz J."/>
            <person name="Larimer F."/>
            <person name="Land M."/>
            <person name="Hauser L."/>
            <person name="Kyrpides N."/>
            <person name="Mikhailova N."/>
            <person name="Miller C.D."/>
            <person name="Richardson P."/>
        </authorList>
    </citation>
    <scope>NUCLEOTIDE SEQUENCE [LARGE SCALE GENOMIC DNA]</scope>
    <source>
        <strain>KMS</strain>
    </source>
</reference>